<reference key="1">
    <citation type="journal article" date="1982" name="Mol. Cell. Biol.">
        <title>Evolution of a multigene family of chorion proteins in silkmoths.</title>
        <authorList>
            <person name="Rodakis G.C."/>
            <person name="Moschonas N.K."/>
            <person name="Kafatos F.C."/>
        </authorList>
    </citation>
    <scope>NUCLEOTIDE SEQUENCE [MRNA]</scope>
</reference>
<feature type="chain" id="PRO_0000168177" description="Chorion class A protein M2774">
    <location>
        <begin position="1" status="less than"/>
        <end position="100"/>
    </location>
</feature>
<feature type="region of interest" description="Left arm">
    <location>
        <begin position="1" status="less than"/>
        <end position="33"/>
    </location>
</feature>
<feature type="region of interest" description="Central domain">
    <location>
        <begin position="34"/>
        <end position="81"/>
    </location>
</feature>
<feature type="region of interest" description="Right arm">
    <location>
        <begin position="82"/>
        <end position="100"/>
    </location>
</feature>
<feature type="non-terminal residue">
    <location>
        <position position="1"/>
    </location>
</feature>
<organism>
    <name type="scientific">Bombyx mori</name>
    <name type="common">Silk moth</name>
    <dbReference type="NCBI Taxonomy" id="7091"/>
    <lineage>
        <taxon>Eukaryota</taxon>
        <taxon>Metazoa</taxon>
        <taxon>Ecdysozoa</taxon>
        <taxon>Arthropoda</taxon>
        <taxon>Hexapoda</taxon>
        <taxon>Insecta</taxon>
        <taxon>Pterygota</taxon>
        <taxon>Neoptera</taxon>
        <taxon>Endopterygota</taxon>
        <taxon>Lepidoptera</taxon>
        <taxon>Glossata</taxon>
        <taxon>Ditrysia</taxon>
        <taxon>Bombycoidea</taxon>
        <taxon>Bombycidae</taxon>
        <taxon>Bombycinae</taxon>
        <taxon>Bombyx</taxon>
    </lineage>
</organism>
<evidence type="ECO:0000305" key="1"/>
<name>CHA3_BOMMO</name>
<sequence length="100" mass="9372">GGGWNGWNGLGGGWNGLGVGWSRLDGGYGGGCGSYGGEGIGNVGVADELPVGGVTAVGGRVPIIGGVEYGGPARAAGAVSICGHCAPTCGCGRAGLGGYY</sequence>
<dbReference type="EMBL" id="J01022">
    <property type="status" value="NOT_ANNOTATED_CDS"/>
    <property type="molecule type" value="mRNA"/>
</dbReference>
<dbReference type="InParanoid" id="P08929"/>
<dbReference type="Proteomes" id="UP000005204">
    <property type="component" value="Unassembled WGS sequence"/>
</dbReference>
<accession>P08929</accession>
<comment type="function">
    <text>This protein is one of many from the eggshell of the silk moth.</text>
</comment>
<comment type="similarity">
    <text evidence="1">Belongs to the chorion protein family.</text>
</comment>
<keyword id="KW-1185">Reference proteome</keyword>
<keyword id="KW-0677">Repeat</keyword>
<proteinExistence type="evidence at transcript level"/>
<protein>
    <recommendedName>
        <fullName>Chorion class A protein M2774</fullName>
    </recommendedName>
</protein>